<accession>P14361</accession>
<accession>Q9ICB1</accession>
<organism>
    <name type="scientific">Fowlpox virus (strain NVSL)</name>
    <name type="common">FPV</name>
    <dbReference type="NCBI Taxonomy" id="928301"/>
    <lineage>
        <taxon>Viruses</taxon>
        <taxon>Varidnaviria</taxon>
        <taxon>Bamfordvirae</taxon>
        <taxon>Nucleocytoviricota</taxon>
        <taxon>Pokkesviricetes</taxon>
        <taxon>Chitovirales</taxon>
        <taxon>Poxviridae</taxon>
        <taxon>Chordopoxvirinae</taxon>
        <taxon>Avipoxvirus</taxon>
        <taxon>Fowlpox virus</taxon>
    </lineage>
</organism>
<organismHost>
    <name type="scientific">Vertebrata</name>
    <dbReference type="NCBI Taxonomy" id="7742"/>
</organismHost>
<comment type="similarity">
    <text evidence="1">Belongs to the poxviruses C4/C10 family.</text>
</comment>
<proteinExistence type="inferred from homology"/>
<name>V006_FOWPN</name>
<feature type="chain" id="PRO_0000099724" description="Uncharacterized protein FPV006/FPV255">
    <location>
        <begin position="1"/>
        <end position="418"/>
    </location>
</feature>
<feature type="sequence conflict" description="In Ref. 1; BAA00190." evidence="1" ref="1">
    <original>S</original>
    <variation>G</variation>
    <location>
        <position position="4"/>
    </location>
</feature>
<feature type="sequence conflict" description="In Ref. 1; BAA00190." evidence="1" ref="1">
    <original>E</original>
    <variation>Q</variation>
    <location>
        <position position="385"/>
    </location>
</feature>
<dbReference type="EMBL" id="D00295">
    <property type="protein sequence ID" value="BAA00190.1"/>
    <property type="molecule type" value="Genomic_DNA"/>
</dbReference>
<dbReference type="EMBL" id="AF198100">
    <property type="protein sequence ID" value="AAF44599.1"/>
    <property type="molecule type" value="Genomic_DNA"/>
</dbReference>
<dbReference type="EMBL" id="AF198100">
    <property type="protein sequence ID" value="AAF44610.1"/>
    <property type="molecule type" value="Genomic_DNA"/>
</dbReference>
<dbReference type="PIR" id="A29963">
    <property type="entry name" value="WMVZFV"/>
</dbReference>
<dbReference type="RefSeq" id="NP_038969.1">
    <property type="nucleotide sequence ID" value="NC_002188.1"/>
</dbReference>
<dbReference type="RefSeq" id="NP_039218.1">
    <property type="nucleotide sequence ID" value="NC_002188.1"/>
</dbReference>
<dbReference type="SMR" id="P14361"/>
<dbReference type="GeneID" id="1486827"/>
<dbReference type="GeneID" id="1486838"/>
<dbReference type="KEGG" id="vg:1486827"/>
<dbReference type="KEGG" id="vg:1486838"/>
<dbReference type="Proteomes" id="UP000008597">
    <property type="component" value="Segment"/>
</dbReference>
<dbReference type="Gene3D" id="2.60.120.620">
    <property type="entry name" value="q2cbj1_9rhob like domain"/>
    <property type="match status" value="1"/>
</dbReference>
<dbReference type="InterPro" id="IPR005004">
    <property type="entry name" value="Poxvirus_C4/C10"/>
</dbReference>
<dbReference type="Pfam" id="PF03336">
    <property type="entry name" value="Pox_C4_C10"/>
    <property type="match status" value="1"/>
</dbReference>
<dbReference type="PIRSF" id="PIRSF003698">
    <property type="entry name" value="VAC_C10L"/>
    <property type="match status" value="1"/>
</dbReference>
<reference key="1">
    <citation type="journal article" date="1988" name="J. Gen. Virol.">
        <title>Sequence analysis of an 11.2 kilobase, near-terminal, BamHI fragment of fowlpox virus.</title>
        <authorList>
            <person name="Tomley F."/>
            <person name="Binns M."/>
            <person name="Campbell J."/>
            <person name="Boursnell M.E.G."/>
        </authorList>
    </citation>
    <scope>NUCLEOTIDE SEQUENCE [GENOMIC DNA]</scope>
    <source>
        <strain>FP-9 / Isolate HP-438</strain>
    </source>
</reference>
<reference key="2">
    <citation type="journal article" date="2000" name="J. Virol.">
        <title>The genome of fowlpox virus.</title>
        <authorList>
            <person name="Afonso C.L."/>
            <person name="Tulman E.R."/>
            <person name="Lu Z."/>
            <person name="Zsak L."/>
            <person name="Kutish G.F."/>
            <person name="Rock D.L."/>
        </authorList>
    </citation>
    <scope>NUCLEOTIDE SEQUENCE [LARGE SCALE GENOMIC DNA]</scope>
</reference>
<evidence type="ECO:0000305" key="1"/>
<keyword id="KW-0244">Early protein</keyword>
<keyword id="KW-1185">Reference proteome</keyword>
<gene>
    <name type="ordered locus">FPV006</name>
</gene>
<gene>
    <name type="ordered locus">FPV255</name>
</gene>
<sequence length="418" mass="48326">MEFSCTGTNNQLAVHRFTETRFTSFKKELLVNLGISDLNDIKNICEDSKIFFPEKRTELLSIKDRKSKQIVFENSLNDDLLKKLHALIYDELSTVVDSVTVENTVTLIMYEKGDYFARHRDFSTVFSKNIICVHLLLYLEQPETGGETVIYIDNNTSVKLKTDHLFDKTIEHESITVESGRKCVALFDVLLEKKLSASTNVIGSIEYLGKKINLYDRENDLQLCYCDMVIERMTEDKEYSLGMISDRSGRCIKSHHNGSIVRYRKEEYGSFDALCIYNMNEVDEIWTGDKKHIIWSTIDKKTGTSFIPIDPVLYEKLKAISSKEHKEYKDLRGFCNSRTEYICCSVSKYYFDLPTKTDLIHEVINSIDYDTKSVGTPDWYTLPIEVKQTILGNMSYEELFNIVRGNIALEEDNEYGCD</sequence>
<protein>
    <recommendedName>
        <fullName>Uncharacterized protein FPV006/FPV255</fullName>
    </recommendedName>
    <alternativeName>
        <fullName>BamHI-ORF1</fullName>
    </alternativeName>
</protein>